<protein>
    <recommendedName>
        <fullName evidence="1">Phosphopentomutase</fullName>
        <ecNumber evidence="1">5.4.2.7</ecNumber>
    </recommendedName>
    <alternativeName>
        <fullName evidence="1">Phosphodeoxyribomutase</fullName>
    </alternativeName>
</protein>
<proteinExistence type="inferred from homology"/>
<gene>
    <name evidence="1" type="primary">deoB</name>
    <name type="ordered locus">Dtur_1472</name>
</gene>
<keyword id="KW-0963">Cytoplasm</keyword>
<keyword id="KW-0413">Isomerase</keyword>
<keyword id="KW-0464">Manganese</keyword>
<keyword id="KW-0479">Metal-binding</keyword>
<keyword id="KW-1185">Reference proteome</keyword>
<name>DEOB_DICTD</name>
<evidence type="ECO:0000255" key="1">
    <source>
        <dbReference type="HAMAP-Rule" id="MF_00740"/>
    </source>
</evidence>
<accession>B8E109</accession>
<sequence>MKRAILIVLDGVGIGELPDAFKYNDEGSNTLVNTAKVVGGLNLPNMGKMGLSNIEEIPGIPKEEDPIALYGKMAEASPGKDSTTGHWEIAGLILEKPFPVYPNGFPKEIIEAFEKAIGRKVIGNKPASGTEIIKELGEYHMKTGYPIVYTSADSVFQIAAHEDVIPVEELYRMCEIARAMLQGDHAVARVIARPFAGSPGNFYRTPRRRDFSLPPFKPTLLDYLKQNDYDVIGVGKIEDLFAGKGLTSSFHQENNTEGINNIFKAWEKLREGLIFVNLVDFDMLYGHRNDPQGMTRALKEFDDALPDVMGLLSDFDLLIITADHGNDPTTPSTDHSREYVPLLVYSPNFKRTFSLGIRKTFSDLGKTLAEFFEVENDLCGESFLNEIEKGWKGS</sequence>
<dbReference type="EC" id="5.4.2.7" evidence="1"/>
<dbReference type="EMBL" id="CP001251">
    <property type="protein sequence ID" value="ACK42746.1"/>
    <property type="molecule type" value="Genomic_DNA"/>
</dbReference>
<dbReference type="RefSeq" id="WP_012583824.1">
    <property type="nucleotide sequence ID" value="NC_011661.1"/>
</dbReference>
<dbReference type="RefSeq" id="YP_002353360.1">
    <property type="nucleotide sequence ID" value="NC_011661.1"/>
</dbReference>
<dbReference type="SMR" id="B8E109"/>
<dbReference type="FunCoup" id="B8E109">
    <property type="interactions" value="48"/>
</dbReference>
<dbReference type="STRING" id="515635.Dtur_1472"/>
<dbReference type="EnsemblBacteria" id="ACK42746">
    <property type="protein sequence ID" value="ACK42746"/>
    <property type="gene ID" value="Dtur_1472"/>
</dbReference>
<dbReference type="KEGG" id="dtu:Dtur_1472"/>
<dbReference type="PATRIC" id="fig|515635.4.peg.1521"/>
<dbReference type="eggNOG" id="COG1015">
    <property type="taxonomic scope" value="Bacteria"/>
</dbReference>
<dbReference type="HOGENOM" id="CLU_053861_0_0_0"/>
<dbReference type="InParanoid" id="B8E109"/>
<dbReference type="OrthoDB" id="9769930at2"/>
<dbReference type="UniPathway" id="UPA00002">
    <property type="reaction ID" value="UER00467"/>
</dbReference>
<dbReference type="Proteomes" id="UP000007719">
    <property type="component" value="Chromosome"/>
</dbReference>
<dbReference type="GO" id="GO:0005829">
    <property type="term" value="C:cytosol"/>
    <property type="evidence" value="ECO:0000318"/>
    <property type="project" value="GO_Central"/>
</dbReference>
<dbReference type="GO" id="GO:0000287">
    <property type="term" value="F:magnesium ion binding"/>
    <property type="evidence" value="ECO:0007669"/>
    <property type="project" value="InterPro"/>
</dbReference>
<dbReference type="GO" id="GO:0030145">
    <property type="term" value="F:manganese ion binding"/>
    <property type="evidence" value="ECO:0007669"/>
    <property type="project" value="UniProtKB-UniRule"/>
</dbReference>
<dbReference type="GO" id="GO:0008973">
    <property type="term" value="F:phosphopentomutase activity"/>
    <property type="evidence" value="ECO:0000318"/>
    <property type="project" value="GO_Central"/>
</dbReference>
<dbReference type="GO" id="GO:0006018">
    <property type="term" value="P:2-deoxyribose 1-phosphate catabolic process"/>
    <property type="evidence" value="ECO:0007669"/>
    <property type="project" value="UniProtKB-UniRule"/>
</dbReference>
<dbReference type="GO" id="GO:0006015">
    <property type="term" value="P:5-phosphoribose 1-diphosphate biosynthetic process"/>
    <property type="evidence" value="ECO:0007669"/>
    <property type="project" value="UniProtKB-UniPathway"/>
</dbReference>
<dbReference type="GO" id="GO:0043094">
    <property type="term" value="P:metabolic compound salvage"/>
    <property type="evidence" value="ECO:0007669"/>
    <property type="project" value="InterPro"/>
</dbReference>
<dbReference type="GO" id="GO:0009117">
    <property type="term" value="P:nucleotide metabolic process"/>
    <property type="evidence" value="ECO:0007669"/>
    <property type="project" value="InterPro"/>
</dbReference>
<dbReference type="CDD" id="cd16009">
    <property type="entry name" value="PPM"/>
    <property type="match status" value="1"/>
</dbReference>
<dbReference type="FunFam" id="3.30.70.1250:FF:000001">
    <property type="entry name" value="Phosphopentomutase"/>
    <property type="match status" value="1"/>
</dbReference>
<dbReference type="Gene3D" id="3.40.720.10">
    <property type="entry name" value="Alkaline Phosphatase, subunit A"/>
    <property type="match status" value="1"/>
</dbReference>
<dbReference type="Gene3D" id="3.30.70.1250">
    <property type="entry name" value="Phosphopentomutase"/>
    <property type="match status" value="1"/>
</dbReference>
<dbReference type="HAMAP" id="MF_00740">
    <property type="entry name" value="Phosphopentomut"/>
    <property type="match status" value="1"/>
</dbReference>
<dbReference type="InterPro" id="IPR017850">
    <property type="entry name" value="Alkaline_phosphatase_core_sf"/>
</dbReference>
<dbReference type="InterPro" id="IPR010045">
    <property type="entry name" value="DeoB"/>
</dbReference>
<dbReference type="InterPro" id="IPR006124">
    <property type="entry name" value="Metalloenzyme"/>
</dbReference>
<dbReference type="InterPro" id="IPR024052">
    <property type="entry name" value="Phosphopentomutase_DeoB_cap_sf"/>
</dbReference>
<dbReference type="NCBIfam" id="TIGR01696">
    <property type="entry name" value="deoB"/>
    <property type="match status" value="1"/>
</dbReference>
<dbReference type="NCBIfam" id="NF003766">
    <property type="entry name" value="PRK05362.1"/>
    <property type="match status" value="1"/>
</dbReference>
<dbReference type="PANTHER" id="PTHR21110">
    <property type="entry name" value="PHOSPHOPENTOMUTASE"/>
    <property type="match status" value="1"/>
</dbReference>
<dbReference type="PANTHER" id="PTHR21110:SF0">
    <property type="entry name" value="PHOSPHOPENTOMUTASE"/>
    <property type="match status" value="1"/>
</dbReference>
<dbReference type="Pfam" id="PF01676">
    <property type="entry name" value="Metalloenzyme"/>
    <property type="match status" value="1"/>
</dbReference>
<dbReference type="PIRSF" id="PIRSF001491">
    <property type="entry name" value="Ppentomutase"/>
    <property type="match status" value="1"/>
</dbReference>
<dbReference type="SUPFAM" id="SSF53649">
    <property type="entry name" value="Alkaline phosphatase-like"/>
    <property type="match status" value="1"/>
</dbReference>
<dbReference type="SUPFAM" id="SSF143856">
    <property type="entry name" value="DeoB insert domain-like"/>
    <property type="match status" value="1"/>
</dbReference>
<reference key="1">
    <citation type="journal article" date="2016" name="Front. Microbiol.">
        <title>The complete genome sequence of hyperthermophile Dictyoglomus turgidum DSM 6724 reveals a specialized carbohydrate fermentor.</title>
        <authorList>
            <person name="Brumm P.J."/>
            <person name="Gowda K."/>
            <person name="Robb F.T."/>
            <person name="Mead D.A."/>
        </authorList>
    </citation>
    <scope>NUCLEOTIDE SEQUENCE [LARGE SCALE GENOMIC DNA]</scope>
    <source>
        <strain>DSM 6724 / Z-1310</strain>
    </source>
</reference>
<comment type="function">
    <text evidence="1">Isomerase that catalyzes the conversion of deoxy-ribose 1-phosphate (dRib-1-P) and ribose 1-phosphate (Rib-1-P) to deoxy-ribose 5-phosphate (dRib-5-P) and ribose 5-phosphate (Rib-5-P), respectively.</text>
</comment>
<comment type="catalytic activity">
    <reaction evidence="1">
        <text>2-deoxy-alpha-D-ribose 1-phosphate = 2-deoxy-D-ribose 5-phosphate</text>
        <dbReference type="Rhea" id="RHEA:27658"/>
        <dbReference type="ChEBI" id="CHEBI:57259"/>
        <dbReference type="ChEBI" id="CHEBI:62877"/>
        <dbReference type="EC" id="5.4.2.7"/>
    </reaction>
</comment>
<comment type="catalytic activity">
    <reaction evidence="1">
        <text>alpha-D-ribose 1-phosphate = D-ribose 5-phosphate</text>
        <dbReference type="Rhea" id="RHEA:18793"/>
        <dbReference type="ChEBI" id="CHEBI:57720"/>
        <dbReference type="ChEBI" id="CHEBI:78346"/>
        <dbReference type="EC" id="5.4.2.7"/>
    </reaction>
</comment>
<comment type="cofactor">
    <cofactor evidence="1">
        <name>Mn(2+)</name>
        <dbReference type="ChEBI" id="CHEBI:29035"/>
    </cofactor>
    <text evidence="1">Binds 2 manganese ions.</text>
</comment>
<comment type="pathway">
    <text evidence="1">Carbohydrate degradation; 2-deoxy-D-ribose 1-phosphate degradation; D-glyceraldehyde 3-phosphate and acetaldehyde from 2-deoxy-alpha-D-ribose 1-phosphate: step 1/2.</text>
</comment>
<comment type="subcellular location">
    <subcellularLocation>
        <location evidence="1">Cytoplasm</location>
    </subcellularLocation>
</comment>
<comment type="similarity">
    <text evidence="1">Belongs to the phosphopentomutase family.</text>
</comment>
<feature type="chain" id="PRO_1000133067" description="Phosphopentomutase">
    <location>
        <begin position="1"/>
        <end position="394"/>
    </location>
</feature>
<feature type="binding site" evidence="1">
    <location>
        <position position="10"/>
    </location>
    <ligand>
        <name>Mn(2+)</name>
        <dbReference type="ChEBI" id="CHEBI:29035"/>
        <label>1</label>
    </ligand>
</feature>
<feature type="binding site" evidence="1">
    <location>
        <position position="282"/>
    </location>
    <ligand>
        <name>Mn(2+)</name>
        <dbReference type="ChEBI" id="CHEBI:29035"/>
        <label>2</label>
    </ligand>
</feature>
<feature type="binding site" evidence="1">
    <location>
        <position position="287"/>
    </location>
    <ligand>
        <name>Mn(2+)</name>
        <dbReference type="ChEBI" id="CHEBI:29035"/>
        <label>2</label>
    </ligand>
</feature>
<feature type="binding site" evidence="1">
    <location>
        <position position="323"/>
    </location>
    <ligand>
        <name>Mn(2+)</name>
        <dbReference type="ChEBI" id="CHEBI:29035"/>
        <label>1</label>
    </ligand>
</feature>
<feature type="binding site" evidence="1">
    <location>
        <position position="324"/>
    </location>
    <ligand>
        <name>Mn(2+)</name>
        <dbReference type="ChEBI" id="CHEBI:29035"/>
        <label>1</label>
    </ligand>
</feature>
<feature type="binding site" evidence="1">
    <location>
        <position position="335"/>
    </location>
    <ligand>
        <name>Mn(2+)</name>
        <dbReference type="ChEBI" id="CHEBI:29035"/>
        <label>2</label>
    </ligand>
</feature>
<organism>
    <name type="scientific">Dictyoglomus turgidum (strain DSM 6724 / Z-1310)</name>
    <dbReference type="NCBI Taxonomy" id="515635"/>
    <lineage>
        <taxon>Bacteria</taxon>
        <taxon>Pseudomonadati</taxon>
        <taxon>Dictyoglomota</taxon>
        <taxon>Dictyoglomia</taxon>
        <taxon>Dictyoglomales</taxon>
        <taxon>Dictyoglomaceae</taxon>
        <taxon>Dictyoglomus</taxon>
    </lineage>
</organism>